<reference key="1">
    <citation type="journal article" date="2001" name="Nature">
        <title>Genome sequence of Yersinia pestis, the causative agent of plague.</title>
        <authorList>
            <person name="Parkhill J."/>
            <person name="Wren B.W."/>
            <person name="Thomson N.R."/>
            <person name="Titball R.W."/>
            <person name="Holden M.T.G."/>
            <person name="Prentice M.B."/>
            <person name="Sebaihia M."/>
            <person name="James K.D."/>
            <person name="Churcher C.M."/>
            <person name="Mungall K.L."/>
            <person name="Baker S."/>
            <person name="Basham D."/>
            <person name="Bentley S.D."/>
            <person name="Brooks K."/>
            <person name="Cerdeno-Tarraga A.-M."/>
            <person name="Chillingworth T."/>
            <person name="Cronin A."/>
            <person name="Davies R.M."/>
            <person name="Davis P."/>
            <person name="Dougan G."/>
            <person name="Feltwell T."/>
            <person name="Hamlin N."/>
            <person name="Holroyd S."/>
            <person name="Jagels K."/>
            <person name="Karlyshev A.V."/>
            <person name="Leather S."/>
            <person name="Moule S."/>
            <person name="Oyston P.C.F."/>
            <person name="Quail M.A."/>
            <person name="Rutherford K.M."/>
            <person name="Simmonds M."/>
            <person name="Skelton J."/>
            <person name="Stevens K."/>
            <person name="Whitehead S."/>
            <person name="Barrell B.G."/>
        </authorList>
    </citation>
    <scope>NUCLEOTIDE SEQUENCE [LARGE SCALE GENOMIC DNA]</scope>
    <source>
        <strain>CO-92 / Biovar Orientalis</strain>
    </source>
</reference>
<reference key="2">
    <citation type="journal article" date="2002" name="J. Bacteriol.">
        <title>Genome sequence of Yersinia pestis KIM.</title>
        <authorList>
            <person name="Deng W."/>
            <person name="Burland V."/>
            <person name="Plunkett G. III"/>
            <person name="Boutin A."/>
            <person name="Mayhew G.F."/>
            <person name="Liss P."/>
            <person name="Perna N.T."/>
            <person name="Rose D.J."/>
            <person name="Mau B."/>
            <person name="Zhou S."/>
            <person name="Schwartz D.C."/>
            <person name="Fetherston J.D."/>
            <person name="Lindler L.E."/>
            <person name="Brubaker R.R."/>
            <person name="Plano G.V."/>
            <person name="Straley S.C."/>
            <person name="McDonough K.A."/>
            <person name="Nilles M.L."/>
            <person name="Matson J.S."/>
            <person name="Blattner F.R."/>
            <person name="Perry R.D."/>
        </authorList>
    </citation>
    <scope>NUCLEOTIDE SEQUENCE [LARGE SCALE GENOMIC DNA]</scope>
    <source>
        <strain>KIM10+ / Biovar Mediaevalis</strain>
    </source>
</reference>
<reference key="3">
    <citation type="journal article" date="2004" name="DNA Res.">
        <title>Complete genome sequence of Yersinia pestis strain 91001, an isolate avirulent to humans.</title>
        <authorList>
            <person name="Song Y."/>
            <person name="Tong Z."/>
            <person name="Wang J."/>
            <person name="Wang L."/>
            <person name="Guo Z."/>
            <person name="Han Y."/>
            <person name="Zhang J."/>
            <person name="Pei D."/>
            <person name="Zhou D."/>
            <person name="Qin H."/>
            <person name="Pang X."/>
            <person name="Han Y."/>
            <person name="Zhai J."/>
            <person name="Li M."/>
            <person name="Cui B."/>
            <person name="Qi Z."/>
            <person name="Jin L."/>
            <person name="Dai R."/>
            <person name="Chen F."/>
            <person name="Li S."/>
            <person name="Ye C."/>
            <person name="Du Z."/>
            <person name="Lin W."/>
            <person name="Wang J."/>
            <person name="Yu J."/>
            <person name="Yang H."/>
            <person name="Wang J."/>
            <person name="Huang P."/>
            <person name="Yang R."/>
        </authorList>
    </citation>
    <scope>NUCLEOTIDE SEQUENCE [LARGE SCALE GENOMIC DNA]</scope>
    <source>
        <strain>91001 / Biovar Mediaevalis</strain>
    </source>
</reference>
<evidence type="ECO:0000255" key="1">
    <source>
        <dbReference type="HAMAP-Rule" id="MF_00550"/>
    </source>
</evidence>
<evidence type="ECO:0000305" key="2"/>
<name>PEPT_YERPE</name>
<feature type="chain" id="PRO_0000185334" description="Peptidase T">
    <location>
        <begin position="1"/>
        <end position="411"/>
    </location>
</feature>
<feature type="active site" evidence="1">
    <location>
        <position position="80"/>
    </location>
</feature>
<feature type="active site" description="Proton acceptor" evidence="1">
    <location>
        <position position="173"/>
    </location>
</feature>
<feature type="binding site" evidence="1">
    <location>
        <position position="78"/>
    </location>
    <ligand>
        <name>Zn(2+)</name>
        <dbReference type="ChEBI" id="CHEBI:29105"/>
        <label>1</label>
    </ligand>
</feature>
<feature type="binding site" evidence="1">
    <location>
        <position position="140"/>
    </location>
    <ligand>
        <name>Zn(2+)</name>
        <dbReference type="ChEBI" id="CHEBI:29105"/>
        <label>1</label>
    </ligand>
</feature>
<feature type="binding site" evidence="1">
    <location>
        <position position="140"/>
    </location>
    <ligand>
        <name>Zn(2+)</name>
        <dbReference type="ChEBI" id="CHEBI:29105"/>
        <label>2</label>
    </ligand>
</feature>
<feature type="binding site" evidence="1">
    <location>
        <position position="174"/>
    </location>
    <ligand>
        <name>Zn(2+)</name>
        <dbReference type="ChEBI" id="CHEBI:29105"/>
        <label>2</label>
    </ligand>
</feature>
<feature type="binding site" evidence="1">
    <location>
        <position position="196"/>
    </location>
    <ligand>
        <name>Zn(2+)</name>
        <dbReference type="ChEBI" id="CHEBI:29105"/>
        <label>1</label>
    </ligand>
</feature>
<feature type="binding site" evidence="1">
    <location>
        <position position="379"/>
    </location>
    <ligand>
        <name>Zn(2+)</name>
        <dbReference type="ChEBI" id="CHEBI:29105"/>
        <label>2</label>
    </ligand>
</feature>
<accession>Q8ZFR0</accession>
<accession>Q0WGE6</accession>
<protein>
    <recommendedName>
        <fullName evidence="1">Peptidase T</fullName>
        <ecNumber evidence="1">3.4.11.4</ecNumber>
    </recommendedName>
    <alternativeName>
        <fullName evidence="1">Aminotripeptidase</fullName>
        <shortName evidence="1">Tripeptidase</shortName>
    </alternativeName>
    <alternativeName>
        <fullName evidence="1">Tripeptide aminopeptidase</fullName>
    </alternativeName>
</protein>
<organism>
    <name type="scientific">Yersinia pestis</name>
    <dbReference type="NCBI Taxonomy" id="632"/>
    <lineage>
        <taxon>Bacteria</taxon>
        <taxon>Pseudomonadati</taxon>
        <taxon>Pseudomonadota</taxon>
        <taxon>Gammaproteobacteria</taxon>
        <taxon>Enterobacterales</taxon>
        <taxon>Yersiniaceae</taxon>
        <taxon>Yersinia</taxon>
    </lineage>
</organism>
<comment type="function">
    <text evidence="1">Cleaves the N-terminal amino acid of tripeptides.</text>
</comment>
<comment type="catalytic activity">
    <reaction evidence="1">
        <text>Release of the N-terminal residue from a tripeptide.</text>
        <dbReference type="EC" id="3.4.11.4"/>
    </reaction>
</comment>
<comment type="cofactor">
    <cofactor evidence="1">
        <name>Zn(2+)</name>
        <dbReference type="ChEBI" id="CHEBI:29105"/>
    </cofactor>
    <text evidence="1">Binds 2 Zn(2+) ions per subunit.</text>
</comment>
<comment type="subcellular location">
    <subcellularLocation>
        <location evidence="1">Cytoplasm</location>
    </subcellularLocation>
</comment>
<comment type="similarity">
    <text evidence="1">Belongs to the peptidase M20B family.</text>
</comment>
<comment type="sequence caution" evidence="2">
    <conflict type="erroneous initiation">
        <sequence resource="EMBL-CDS" id="AAM85359"/>
    </conflict>
</comment>
<comment type="sequence caution" evidence="2">
    <conflict type="erroneous initiation">
        <sequence resource="EMBL-CDS" id="AAS61988"/>
    </conflict>
</comment>
<proteinExistence type="inferred from homology"/>
<gene>
    <name evidence="1" type="primary">pepT</name>
    <name type="ordered locus">YPO1631</name>
    <name type="ordered locus">y1791</name>
    <name type="ordered locus">YP_1761</name>
</gene>
<keyword id="KW-0031">Aminopeptidase</keyword>
<keyword id="KW-0963">Cytoplasm</keyword>
<keyword id="KW-0378">Hydrolase</keyword>
<keyword id="KW-0479">Metal-binding</keyword>
<keyword id="KW-0482">Metalloprotease</keyword>
<keyword id="KW-0645">Protease</keyword>
<keyword id="KW-1185">Reference proteome</keyword>
<keyword id="KW-0862">Zinc</keyword>
<sequence>MDKLLDRFFNYVSFDTQAKANVKSVPSTQGQRKLAQALQQELLTLGFSHVTLSDHGCVMATLPANVSWPVPTIGFIAHLDTSPDFSGKNVNPQIVENYRGGDIALGIGDEVLSPVMFPVLHQLLGHTLITTDGKTLLGADDKAGIAEIITAMVRLKHRNVPHGDIRIAFTPDEEVGKGAQFFNVAEFDAQWAYTVDGGGIGELEFENFNAASVAIKIVGNNVHPGSAKGVMVNALSLATRYHQELPVDETPECTEGYDGFYHLQSIKGTVERAEMHYIVRDFNRDSFEARKKNMVDIAKRVGKGLHRDCYIEIVIDDSYYNMREQIIKHPHIIELAQQAMLDCDITPIMKPIRGGTDGAQLSFKGLPCPNIFTGGYNYHGKHEFITLEGMEKAVAVIMRISELTAKRAKES</sequence>
<dbReference type="EC" id="3.4.11.4" evidence="1"/>
<dbReference type="EMBL" id="AL590842">
    <property type="protein sequence ID" value="CAL20276.1"/>
    <property type="molecule type" value="Genomic_DNA"/>
</dbReference>
<dbReference type="EMBL" id="AE009952">
    <property type="protein sequence ID" value="AAM85359.1"/>
    <property type="status" value="ALT_INIT"/>
    <property type="molecule type" value="Genomic_DNA"/>
</dbReference>
<dbReference type="EMBL" id="AE017042">
    <property type="protein sequence ID" value="AAS61988.1"/>
    <property type="status" value="ALT_INIT"/>
    <property type="molecule type" value="Genomic_DNA"/>
</dbReference>
<dbReference type="PIR" id="AB0199">
    <property type="entry name" value="AB0199"/>
</dbReference>
<dbReference type="RefSeq" id="WP_002210920.1">
    <property type="nucleotide sequence ID" value="NZ_WUCM01000020.1"/>
</dbReference>
<dbReference type="RefSeq" id="YP_002346642.1">
    <property type="nucleotide sequence ID" value="NC_003143.1"/>
</dbReference>
<dbReference type="SMR" id="Q8ZFR0"/>
<dbReference type="IntAct" id="Q8ZFR0">
    <property type="interactions" value="2"/>
</dbReference>
<dbReference type="STRING" id="214092.YPO1631"/>
<dbReference type="MEROPS" id="M20.003"/>
<dbReference type="PaxDb" id="214092-YPO1631"/>
<dbReference type="DNASU" id="1146738"/>
<dbReference type="EnsemblBacteria" id="AAS61988">
    <property type="protein sequence ID" value="AAS61988"/>
    <property type="gene ID" value="YP_1761"/>
</dbReference>
<dbReference type="GeneID" id="57976942"/>
<dbReference type="KEGG" id="ype:YPO1631"/>
<dbReference type="KEGG" id="ypk:y1791"/>
<dbReference type="KEGG" id="ypm:YP_1761"/>
<dbReference type="PATRIC" id="fig|214092.21.peg.1976"/>
<dbReference type="eggNOG" id="COG2195">
    <property type="taxonomic scope" value="Bacteria"/>
</dbReference>
<dbReference type="HOGENOM" id="CLU_053676_0_0_6"/>
<dbReference type="OMA" id="GHNFHGK"/>
<dbReference type="OrthoDB" id="9804934at2"/>
<dbReference type="Proteomes" id="UP000000815">
    <property type="component" value="Chromosome"/>
</dbReference>
<dbReference type="Proteomes" id="UP000001019">
    <property type="component" value="Chromosome"/>
</dbReference>
<dbReference type="Proteomes" id="UP000002490">
    <property type="component" value="Chromosome"/>
</dbReference>
<dbReference type="GO" id="GO:0005829">
    <property type="term" value="C:cytosol"/>
    <property type="evidence" value="ECO:0000318"/>
    <property type="project" value="GO_Central"/>
</dbReference>
<dbReference type="GO" id="GO:0008237">
    <property type="term" value="F:metallopeptidase activity"/>
    <property type="evidence" value="ECO:0007669"/>
    <property type="project" value="UniProtKB-KW"/>
</dbReference>
<dbReference type="GO" id="GO:0045148">
    <property type="term" value="F:tripeptide aminopeptidase activity"/>
    <property type="evidence" value="ECO:0000318"/>
    <property type="project" value="GO_Central"/>
</dbReference>
<dbReference type="GO" id="GO:0008270">
    <property type="term" value="F:zinc ion binding"/>
    <property type="evidence" value="ECO:0007669"/>
    <property type="project" value="UniProtKB-UniRule"/>
</dbReference>
<dbReference type="GO" id="GO:0043171">
    <property type="term" value="P:peptide catabolic process"/>
    <property type="evidence" value="ECO:0007669"/>
    <property type="project" value="UniProtKB-UniRule"/>
</dbReference>
<dbReference type="GO" id="GO:0006508">
    <property type="term" value="P:proteolysis"/>
    <property type="evidence" value="ECO:0007669"/>
    <property type="project" value="UniProtKB-UniRule"/>
</dbReference>
<dbReference type="CDD" id="cd03892">
    <property type="entry name" value="M20_peptT"/>
    <property type="match status" value="1"/>
</dbReference>
<dbReference type="FunFam" id="3.30.70.360:FF:000002">
    <property type="entry name" value="Peptidase T"/>
    <property type="match status" value="1"/>
</dbReference>
<dbReference type="Gene3D" id="3.30.70.360">
    <property type="match status" value="1"/>
</dbReference>
<dbReference type="Gene3D" id="3.40.630.10">
    <property type="entry name" value="Zn peptidases"/>
    <property type="match status" value="1"/>
</dbReference>
<dbReference type="HAMAP" id="MF_00550">
    <property type="entry name" value="Aminopeptidase_M20"/>
    <property type="match status" value="1"/>
</dbReference>
<dbReference type="InterPro" id="IPR001261">
    <property type="entry name" value="ArgE/DapE_CS"/>
</dbReference>
<dbReference type="InterPro" id="IPR036264">
    <property type="entry name" value="Bact_exopeptidase_dim_dom"/>
</dbReference>
<dbReference type="InterPro" id="IPR002933">
    <property type="entry name" value="Peptidase_M20"/>
</dbReference>
<dbReference type="InterPro" id="IPR011650">
    <property type="entry name" value="Peptidase_M20_dimer"/>
</dbReference>
<dbReference type="InterPro" id="IPR010161">
    <property type="entry name" value="Peptidase_M20B"/>
</dbReference>
<dbReference type="NCBIfam" id="TIGR01882">
    <property type="entry name" value="peptidase-T"/>
    <property type="match status" value="1"/>
</dbReference>
<dbReference type="NCBIfam" id="NF003976">
    <property type="entry name" value="PRK05469.1"/>
    <property type="match status" value="1"/>
</dbReference>
<dbReference type="NCBIfam" id="NF009920">
    <property type="entry name" value="PRK13381.1"/>
    <property type="match status" value="1"/>
</dbReference>
<dbReference type="PANTHER" id="PTHR42994">
    <property type="entry name" value="PEPTIDASE T"/>
    <property type="match status" value="1"/>
</dbReference>
<dbReference type="PANTHER" id="PTHR42994:SF1">
    <property type="entry name" value="PEPTIDASE T"/>
    <property type="match status" value="1"/>
</dbReference>
<dbReference type="Pfam" id="PF07687">
    <property type="entry name" value="M20_dimer"/>
    <property type="match status" value="1"/>
</dbReference>
<dbReference type="Pfam" id="PF01546">
    <property type="entry name" value="Peptidase_M20"/>
    <property type="match status" value="1"/>
</dbReference>
<dbReference type="PIRSF" id="PIRSF037215">
    <property type="entry name" value="Peptidase_M20B"/>
    <property type="match status" value="1"/>
</dbReference>
<dbReference type="SUPFAM" id="SSF55031">
    <property type="entry name" value="Bacterial exopeptidase dimerisation domain"/>
    <property type="match status" value="1"/>
</dbReference>
<dbReference type="SUPFAM" id="SSF53187">
    <property type="entry name" value="Zn-dependent exopeptidases"/>
    <property type="match status" value="1"/>
</dbReference>
<dbReference type="PROSITE" id="PS00758">
    <property type="entry name" value="ARGE_DAPE_CPG2_1"/>
    <property type="match status" value="1"/>
</dbReference>
<dbReference type="PROSITE" id="PS00759">
    <property type="entry name" value="ARGE_DAPE_CPG2_2"/>
    <property type="match status" value="1"/>
</dbReference>